<keyword id="KW-0963">Cytoplasm</keyword>
<keyword id="KW-0238">DNA-binding</keyword>
<keyword id="KW-1185">Reference proteome</keyword>
<keyword id="KW-0677">Repeat</keyword>
<keyword id="KW-0804">Transcription</keyword>
<keyword id="KW-0805">Transcription regulation</keyword>
<reference key="1">
    <citation type="journal article" date="2008" name="DNA Res.">
        <title>Comparative genome analysis of Lactobacillus reuteri and Lactobacillus fermentum reveal a genomic island for reuterin and cobalamin production.</title>
        <authorList>
            <person name="Morita H."/>
            <person name="Toh H."/>
            <person name="Fukuda S."/>
            <person name="Horikawa H."/>
            <person name="Oshima K."/>
            <person name="Suzuki T."/>
            <person name="Murakami M."/>
            <person name="Hisamatsu S."/>
            <person name="Kato Y."/>
            <person name="Takizawa T."/>
            <person name="Fukuoka H."/>
            <person name="Yoshimura T."/>
            <person name="Itoh K."/>
            <person name="O'Sullivan D.J."/>
            <person name="McKay L.L."/>
            <person name="Ohno H."/>
            <person name="Kikuchi J."/>
            <person name="Masaoka T."/>
            <person name="Hattori M."/>
        </authorList>
    </citation>
    <scope>NUCLEOTIDE SEQUENCE [LARGE SCALE GENOMIC DNA]</scope>
    <source>
        <strain>NBRC 3956 / LMG 18251</strain>
    </source>
</reference>
<sequence length="143" mass="16264">MFMGEYTHTIDDKGRLIIPAKFRSQLGDDFIITRGLDHCLYGYPLIEWQAVQQRLASLPSTNANARKLVRYFYSAACECQFDKQGRVNLPANLMQHAYLERDCVVIGVASHFEIWDAERWASYQDAAASDFDQLAAGFDGLSF</sequence>
<comment type="subunit">
    <text evidence="1">Forms oligomers.</text>
</comment>
<comment type="subcellular location">
    <subcellularLocation>
        <location evidence="1">Cytoplasm</location>
        <location evidence="1">Nucleoid</location>
    </subcellularLocation>
</comment>
<comment type="similarity">
    <text evidence="1">Belongs to the MraZ family.</text>
</comment>
<feature type="chain" id="PRO_1000134806" description="Transcriptional regulator MraZ">
    <location>
        <begin position="1"/>
        <end position="143"/>
    </location>
</feature>
<feature type="domain" description="SpoVT-AbrB 1" evidence="2">
    <location>
        <begin position="5"/>
        <end position="47"/>
    </location>
</feature>
<feature type="domain" description="SpoVT-AbrB 2" evidence="2">
    <location>
        <begin position="76"/>
        <end position="119"/>
    </location>
</feature>
<organism>
    <name type="scientific">Limosilactobacillus fermentum (strain NBRC 3956 / LMG 18251)</name>
    <name type="common">Lactobacillus fermentum</name>
    <dbReference type="NCBI Taxonomy" id="334390"/>
    <lineage>
        <taxon>Bacteria</taxon>
        <taxon>Bacillati</taxon>
        <taxon>Bacillota</taxon>
        <taxon>Bacilli</taxon>
        <taxon>Lactobacillales</taxon>
        <taxon>Lactobacillaceae</taxon>
        <taxon>Limosilactobacillus</taxon>
    </lineage>
</organism>
<proteinExistence type="inferred from homology"/>
<protein>
    <recommendedName>
        <fullName>Transcriptional regulator MraZ</fullName>
    </recommendedName>
</protein>
<gene>
    <name evidence="1" type="primary">mraZ</name>
    <name type="ordered locus">LAF_0568</name>
</gene>
<dbReference type="EMBL" id="AP008937">
    <property type="protein sequence ID" value="BAG26904.1"/>
    <property type="molecule type" value="Genomic_DNA"/>
</dbReference>
<dbReference type="RefSeq" id="WP_003682145.1">
    <property type="nucleotide sequence ID" value="NC_010610.1"/>
</dbReference>
<dbReference type="SMR" id="B2GB72"/>
<dbReference type="GeneID" id="83715098"/>
<dbReference type="KEGG" id="lfe:LAF_0568"/>
<dbReference type="eggNOG" id="COG2001">
    <property type="taxonomic scope" value="Bacteria"/>
</dbReference>
<dbReference type="HOGENOM" id="CLU_107907_0_5_9"/>
<dbReference type="Proteomes" id="UP000001697">
    <property type="component" value="Chromosome"/>
</dbReference>
<dbReference type="GO" id="GO:0005737">
    <property type="term" value="C:cytoplasm"/>
    <property type="evidence" value="ECO:0007669"/>
    <property type="project" value="UniProtKB-UniRule"/>
</dbReference>
<dbReference type="GO" id="GO:0009295">
    <property type="term" value="C:nucleoid"/>
    <property type="evidence" value="ECO:0007669"/>
    <property type="project" value="UniProtKB-SubCell"/>
</dbReference>
<dbReference type="GO" id="GO:0003700">
    <property type="term" value="F:DNA-binding transcription factor activity"/>
    <property type="evidence" value="ECO:0007669"/>
    <property type="project" value="UniProtKB-UniRule"/>
</dbReference>
<dbReference type="GO" id="GO:0000976">
    <property type="term" value="F:transcription cis-regulatory region binding"/>
    <property type="evidence" value="ECO:0007669"/>
    <property type="project" value="TreeGrafter"/>
</dbReference>
<dbReference type="GO" id="GO:2000143">
    <property type="term" value="P:negative regulation of DNA-templated transcription initiation"/>
    <property type="evidence" value="ECO:0007669"/>
    <property type="project" value="TreeGrafter"/>
</dbReference>
<dbReference type="CDD" id="cd16321">
    <property type="entry name" value="MraZ_C"/>
    <property type="match status" value="1"/>
</dbReference>
<dbReference type="CDD" id="cd16320">
    <property type="entry name" value="MraZ_N"/>
    <property type="match status" value="1"/>
</dbReference>
<dbReference type="FunFam" id="3.40.1550.20:FF:000002">
    <property type="entry name" value="Transcriptional regulator MraZ"/>
    <property type="match status" value="1"/>
</dbReference>
<dbReference type="Gene3D" id="3.40.1550.20">
    <property type="entry name" value="Transcriptional regulator MraZ domain"/>
    <property type="match status" value="1"/>
</dbReference>
<dbReference type="HAMAP" id="MF_01008">
    <property type="entry name" value="MraZ"/>
    <property type="match status" value="1"/>
</dbReference>
<dbReference type="InterPro" id="IPR003444">
    <property type="entry name" value="MraZ"/>
</dbReference>
<dbReference type="InterPro" id="IPR035644">
    <property type="entry name" value="MraZ_C"/>
</dbReference>
<dbReference type="InterPro" id="IPR020603">
    <property type="entry name" value="MraZ_dom"/>
</dbReference>
<dbReference type="InterPro" id="IPR035642">
    <property type="entry name" value="MraZ_N"/>
</dbReference>
<dbReference type="InterPro" id="IPR038619">
    <property type="entry name" value="MraZ_sf"/>
</dbReference>
<dbReference type="InterPro" id="IPR007159">
    <property type="entry name" value="SpoVT-AbrB_dom"/>
</dbReference>
<dbReference type="InterPro" id="IPR037914">
    <property type="entry name" value="SpoVT-AbrB_sf"/>
</dbReference>
<dbReference type="NCBIfam" id="TIGR00242">
    <property type="entry name" value="division/cell wall cluster transcriptional repressor MraZ"/>
    <property type="match status" value="1"/>
</dbReference>
<dbReference type="PANTHER" id="PTHR34701">
    <property type="entry name" value="TRANSCRIPTIONAL REGULATOR MRAZ"/>
    <property type="match status" value="1"/>
</dbReference>
<dbReference type="PANTHER" id="PTHR34701:SF1">
    <property type="entry name" value="TRANSCRIPTIONAL REGULATOR MRAZ"/>
    <property type="match status" value="1"/>
</dbReference>
<dbReference type="Pfam" id="PF02381">
    <property type="entry name" value="MraZ"/>
    <property type="match status" value="2"/>
</dbReference>
<dbReference type="SUPFAM" id="SSF89447">
    <property type="entry name" value="AbrB/MazE/MraZ-like"/>
    <property type="match status" value="1"/>
</dbReference>
<dbReference type="PROSITE" id="PS51740">
    <property type="entry name" value="SPOVT_ABRB"/>
    <property type="match status" value="2"/>
</dbReference>
<accession>B2GB72</accession>
<evidence type="ECO:0000255" key="1">
    <source>
        <dbReference type="HAMAP-Rule" id="MF_01008"/>
    </source>
</evidence>
<evidence type="ECO:0000255" key="2">
    <source>
        <dbReference type="PROSITE-ProRule" id="PRU01076"/>
    </source>
</evidence>
<name>MRAZ_LIMF3</name>